<proteinExistence type="inferred from homology"/>
<dbReference type="EMBL" id="AF042732">
    <property type="protein sequence ID" value="AAC18058.1"/>
    <property type="molecule type" value="Genomic_DNA"/>
</dbReference>
<dbReference type="EMBL" id="AAAB01008984">
    <property type="protein sequence ID" value="EAA14736.2"/>
    <property type="molecule type" value="Genomic_DNA"/>
</dbReference>
<dbReference type="SMR" id="O61470"/>
<dbReference type="FunCoup" id="O61470">
    <property type="interactions" value="1743"/>
</dbReference>
<dbReference type="STRING" id="7165.O61470"/>
<dbReference type="PaxDb" id="7165-AGAP009082-PA"/>
<dbReference type="EnsemblMetazoa" id="AGAP009082-RA">
    <property type="protein sequence ID" value="AGAP009082-PA"/>
    <property type="gene ID" value="AGAP009082"/>
</dbReference>
<dbReference type="GeneID" id="1280037"/>
<dbReference type="KEGG" id="aga:1280037"/>
<dbReference type="CTD" id="35176"/>
<dbReference type="VEuPathDB" id="VectorBase:AGAMI1_002885"/>
<dbReference type="VEuPathDB" id="VectorBase:AGAP009082"/>
<dbReference type="eggNOG" id="KOG2581">
    <property type="taxonomic scope" value="Eukaryota"/>
</dbReference>
<dbReference type="HOGENOM" id="CLU_019858_1_2_1"/>
<dbReference type="InParanoid" id="O61470"/>
<dbReference type="OMA" id="AKVYFYF"/>
<dbReference type="PhylomeDB" id="O61470"/>
<dbReference type="Proteomes" id="UP000007062">
    <property type="component" value="Chromosome 3R"/>
</dbReference>
<dbReference type="GO" id="GO:0008541">
    <property type="term" value="C:proteasome regulatory particle, lid subcomplex"/>
    <property type="evidence" value="ECO:0000318"/>
    <property type="project" value="GO_Central"/>
</dbReference>
<dbReference type="GO" id="GO:0030234">
    <property type="term" value="F:enzyme regulator activity"/>
    <property type="evidence" value="ECO:0007669"/>
    <property type="project" value="InterPro"/>
</dbReference>
<dbReference type="GO" id="GO:0042176">
    <property type="term" value="P:regulation of protein catabolic process"/>
    <property type="evidence" value="ECO:0007669"/>
    <property type="project" value="InterPro"/>
</dbReference>
<dbReference type="GO" id="GO:0006511">
    <property type="term" value="P:ubiquitin-dependent protein catabolic process"/>
    <property type="evidence" value="ECO:0000318"/>
    <property type="project" value="GO_Central"/>
</dbReference>
<dbReference type="FunFam" id="1.25.40.570:FF:000009">
    <property type="entry name" value="26S proteasome non-ATPase regulatory subunit 3"/>
    <property type="match status" value="1"/>
</dbReference>
<dbReference type="Gene3D" id="1.25.40.570">
    <property type="match status" value="1"/>
</dbReference>
<dbReference type="InterPro" id="IPR013586">
    <property type="entry name" value="26S_Psome_reg_C"/>
</dbReference>
<dbReference type="InterPro" id="IPR050756">
    <property type="entry name" value="CSN3"/>
</dbReference>
<dbReference type="InterPro" id="IPR000717">
    <property type="entry name" value="PCI_dom"/>
</dbReference>
<dbReference type="InterPro" id="IPR036390">
    <property type="entry name" value="WH_DNA-bd_sf"/>
</dbReference>
<dbReference type="PANTHER" id="PTHR10758:SF2">
    <property type="entry name" value="26S PROTEASOME NON-ATPASE REGULATORY SUBUNIT 3"/>
    <property type="match status" value="1"/>
</dbReference>
<dbReference type="PANTHER" id="PTHR10758">
    <property type="entry name" value="26S PROTEASOME NON-ATPASE REGULATORY SUBUNIT 3/COP9 SIGNALOSOME COMPLEX SUBUNIT 3"/>
    <property type="match status" value="1"/>
</dbReference>
<dbReference type="Pfam" id="PF01399">
    <property type="entry name" value="PCI"/>
    <property type="match status" value="1"/>
</dbReference>
<dbReference type="Pfam" id="PF08375">
    <property type="entry name" value="Rpn3_C"/>
    <property type="match status" value="1"/>
</dbReference>
<dbReference type="SMART" id="SM00753">
    <property type="entry name" value="PAM"/>
    <property type="match status" value="1"/>
</dbReference>
<dbReference type="SMART" id="SM00088">
    <property type="entry name" value="PINT"/>
    <property type="match status" value="1"/>
</dbReference>
<dbReference type="SUPFAM" id="SSF46785">
    <property type="entry name" value="Winged helix' DNA-binding domain"/>
    <property type="match status" value="1"/>
</dbReference>
<dbReference type="PROSITE" id="PS50250">
    <property type="entry name" value="PCI"/>
    <property type="match status" value="1"/>
</dbReference>
<name>PSMD3_ANOGA</name>
<organism>
    <name type="scientific">Anopheles gambiae</name>
    <name type="common">African malaria mosquito</name>
    <dbReference type="NCBI Taxonomy" id="7165"/>
    <lineage>
        <taxon>Eukaryota</taxon>
        <taxon>Metazoa</taxon>
        <taxon>Ecdysozoa</taxon>
        <taxon>Arthropoda</taxon>
        <taxon>Hexapoda</taxon>
        <taxon>Insecta</taxon>
        <taxon>Pterygota</taxon>
        <taxon>Neoptera</taxon>
        <taxon>Endopterygota</taxon>
        <taxon>Diptera</taxon>
        <taxon>Nematocera</taxon>
        <taxon>Culicoidea</taxon>
        <taxon>Culicidae</taxon>
        <taxon>Anophelinae</taxon>
        <taxon>Anopheles</taxon>
    </lineage>
</organism>
<feature type="chain" id="PRO_0000173819" description="Probable 26S proteasome non-ATPase regulatory subunit 3">
    <location>
        <begin position="1"/>
        <end position="496"/>
    </location>
</feature>
<feature type="domain" description="PCI" evidence="2">
    <location>
        <begin position="249"/>
        <end position="428"/>
    </location>
</feature>
<feature type="region of interest" description="Disordered" evidence="3">
    <location>
        <begin position="458"/>
        <end position="480"/>
    </location>
</feature>
<feature type="compositionally biased region" description="Basic and acidic residues" evidence="3">
    <location>
        <begin position="464"/>
        <end position="480"/>
    </location>
</feature>
<feature type="sequence conflict" description="In Ref. 1; AAC18058." evidence="4" ref="1">
    <original>S</original>
    <variation>T</variation>
    <location>
        <position position="423"/>
    </location>
</feature>
<gene>
    <name type="primary">Dox-A2</name>
    <name type="ORF">AGAP009082</name>
</gene>
<evidence type="ECO:0000250" key="1"/>
<evidence type="ECO:0000255" key="2">
    <source>
        <dbReference type="PROSITE-ProRule" id="PRU01185"/>
    </source>
</evidence>
<evidence type="ECO:0000256" key="3">
    <source>
        <dbReference type="SAM" id="MobiDB-lite"/>
    </source>
</evidence>
<evidence type="ECO:0000305" key="4"/>
<evidence type="ECO:0000305" key="5">
    <source>
    </source>
</evidence>
<keyword id="KW-0647">Proteasome</keyword>
<keyword id="KW-1185">Reference proteome</keyword>
<accession>O61470</accession>
<accession>Q7PW59</accession>
<comment type="function">
    <text evidence="1">Acts as a regulatory subunit of the 26 proteasome which is involved in the ATP-dependent degradation of ubiquitinated proteins.</text>
</comment>
<comment type="subunit">
    <text evidence="1">The 26S proteasome is composed of a core protease, known as the 20S proteasome, capped at one or both ends by the 19S regulatory complex (RC). The RC is composed of at least 18 different subunits in two subcomplexes, the base and the lid, which form the portions proximal and distal to the 20S proteolytic core, respectively (By similarity).</text>
</comment>
<comment type="similarity">
    <text evidence="4">Belongs to the proteasome subunit S3 family.</text>
</comment>
<comment type="caution">
    <text evidence="5">Was originally thought to be the diphenol oxidase A2 component involved in catecholamine metabolism, melanin formation, and sclerotization of the cuticle.</text>
</comment>
<protein>
    <recommendedName>
        <fullName>Probable 26S proteasome non-ATPase regulatory subunit 3</fullName>
        <shortName>26S proteasome subunit S3</shortName>
    </recommendedName>
    <alternativeName>
        <fullName>26S proteasome regulatory subunit RPN3</fullName>
    </alternativeName>
    <alternativeName>
        <fullName>Diphenol oxidase A2 component</fullName>
        <shortName>DOX-A2</shortName>
    </alternativeName>
</protein>
<reference key="1">
    <citation type="journal article" date="1999" name="Am. J. Trop. Med. Hyg.">
        <title>Linkage of a gene causing malaria refractoriness to Diphenol oxidase-A2 on chromosome 3 of Anopheles gambiae.</title>
        <authorList>
            <person name="Romans P."/>
            <person name="Black W.C. IV"/>
            <person name="Sakai R.K."/>
            <person name="Gwadz R.W."/>
        </authorList>
    </citation>
    <scope>NUCLEOTIDE SEQUENCE [GENOMIC DNA]</scope>
    <source>
        <strain>G3</strain>
    </source>
</reference>
<reference key="2">
    <citation type="journal article" date="2002" name="Science">
        <title>The genome sequence of the malaria mosquito Anopheles gambiae.</title>
        <authorList>
            <person name="Holt R.A."/>
            <person name="Subramanian G.M."/>
            <person name="Halpern A."/>
            <person name="Sutton G.G."/>
            <person name="Charlab R."/>
            <person name="Nusskern D.R."/>
            <person name="Wincker P."/>
            <person name="Clark A.G."/>
            <person name="Ribeiro J.M.C."/>
            <person name="Wides R."/>
            <person name="Salzberg S.L."/>
            <person name="Loftus B.J."/>
            <person name="Yandell M.D."/>
            <person name="Majoros W.H."/>
            <person name="Rusch D.B."/>
            <person name="Lai Z."/>
            <person name="Kraft C.L."/>
            <person name="Abril J.F."/>
            <person name="Anthouard V."/>
            <person name="Arensburger P."/>
            <person name="Atkinson P.W."/>
            <person name="Baden H."/>
            <person name="de Berardinis V."/>
            <person name="Baldwin D."/>
            <person name="Benes V."/>
            <person name="Biedler J."/>
            <person name="Blass C."/>
            <person name="Bolanos R."/>
            <person name="Boscus D."/>
            <person name="Barnstead M."/>
            <person name="Cai S."/>
            <person name="Center A."/>
            <person name="Chaturverdi K."/>
            <person name="Christophides G.K."/>
            <person name="Chrystal M.A.M."/>
            <person name="Clamp M."/>
            <person name="Cravchik A."/>
            <person name="Curwen V."/>
            <person name="Dana A."/>
            <person name="Delcher A."/>
            <person name="Dew I."/>
            <person name="Evans C.A."/>
            <person name="Flanigan M."/>
            <person name="Grundschober-Freimoser A."/>
            <person name="Friedli L."/>
            <person name="Gu Z."/>
            <person name="Guan P."/>
            <person name="Guigo R."/>
            <person name="Hillenmeyer M.E."/>
            <person name="Hladun S.L."/>
            <person name="Hogan J.R."/>
            <person name="Hong Y.S."/>
            <person name="Hoover J."/>
            <person name="Jaillon O."/>
            <person name="Ke Z."/>
            <person name="Kodira C.D."/>
            <person name="Kokoza E."/>
            <person name="Koutsos A."/>
            <person name="Letunic I."/>
            <person name="Levitsky A.A."/>
            <person name="Liang Y."/>
            <person name="Lin J.-J."/>
            <person name="Lobo N.F."/>
            <person name="Lopez J.R."/>
            <person name="Malek J.A."/>
            <person name="McIntosh T.C."/>
            <person name="Meister S."/>
            <person name="Miller J.R."/>
            <person name="Mobarry C."/>
            <person name="Mongin E."/>
            <person name="Murphy S.D."/>
            <person name="O'Brochta D.A."/>
            <person name="Pfannkoch C."/>
            <person name="Qi R."/>
            <person name="Regier M.A."/>
            <person name="Remington K."/>
            <person name="Shao H."/>
            <person name="Sharakhova M.V."/>
            <person name="Sitter C.D."/>
            <person name="Shetty J."/>
            <person name="Smith T.J."/>
            <person name="Strong R."/>
            <person name="Sun J."/>
            <person name="Thomasova D."/>
            <person name="Ton L.Q."/>
            <person name="Topalis P."/>
            <person name="Tu Z.J."/>
            <person name="Unger M.F."/>
            <person name="Walenz B."/>
            <person name="Wang A.H."/>
            <person name="Wang J."/>
            <person name="Wang M."/>
            <person name="Wang X."/>
            <person name="Woodford K.J."/>
            <person name="Wortman J.R."/>
            <person name="Wu M."/>
            <person name="Yao A."/>
            <person name="Zdobnov E.M."/>
            <person name="Zhang H."/>
            <person name="Zhao Q."/>
            <person name="Zhao S."/>
            <person name="Zhu S.C."/>
            <person name="Zhimulev I."/>
            <person name="Coluzzi M."/>
            <person name="della Torre A."/>
            <person name="Roth C.W."/>
            <person name="Louis C."/>
            <person name="Kalush F."/>
            <person name="Mural R.J."/>
            <person name="Myers E.W."/>
            <person name="Adams M.D."/>
            <person name="Smith H.O."/>
            <person name="Broder S."/>
            <person name="Gardner M.J."/>
            <person name="Fraser C.M."/>
            <person name="Birney E."/>
            <person name="Bork P."/>
            <person name="Brey P.T."/>
            <person name="Venter J.C."/>
            <person name="Weissenbach J."/>
            <person name="Kafatos F.C."/>
            <person name="Collins F.H."/>
            <person name="Hoffman S.L."/>
        </authorList>
    </citation>
    <scope>NUCLEOTIDE SEQUENCE [LARGE SCALE GENOMIC DNA]</scope>
    <source>
        <strain>PEST</strain>
    </source>
</reference>
<sequence>MVSQTAAAAAPADPIVDVEMESAEDAEAAKKDAELLAVQEIRDHARQIDKAVVSKEPRFILRVLRSLPTTRRKLALVVVRSLAVQLYPAGPERDGIMAYIEDYPAGAQEPELPRPRAAIKSPVPEVDAYFHLLLLVRLLDKNDLPKATKCSQDLMAKVVGQNRRSLDLIAAKSYFYHSRVAELNNDLESIRSFLHSRLRTATLRNDFEGQAVLINCLLRNYLHYSLYDQADKLVNKSVFPETASNNECARFLYYLGRIKAAKLEYSVAHKQLVQALRKAPQQAAVGFRQTVQKLVIVVELLLGDIPERKVFRQAALRRSLGPYFQLTQAVRMGNLQRFGEVLVNFGEQFRQDHTFTLIIRLRHNVIKTAIRSIGLAYSRISPQDIARKLGLDSPEDAEFIVAKAIRDGVIEATLDPEKGYMRSKESTDIYSTREPQLAFHQRISFCLDLHNQSVKAMRYPPKSYGKELESAEERREREQQDLELAKEMAEEDDDGF</sequence>